<proteinExistence type="evidence at protein level"/>
<protein>
    <recommendedName>
        <fullName evidence="5">Peroxisomal trans-2-enoyl-CoA reductase</fullName>
        <shortName>TERP</shortName>
        <ecNumber evidence="3">1.3.1.38</ecNumber>
    </recommendedName>
</protein>
<evidence type="ECO:0000250" key="1"/>
<evidence type="ECO:0000250" key="2">
    <source>
        <dbReference type="UniProtKB" id="Q9BY49"/>
    </source>
</evidence>
<evidence type="ECO:0000250" key="3">
    <source>
        <dbReference type="UniProtKB" id="Q9JIF5"/>
    </source>
</evidence>
<evidence type="ECO:0000269" key="4">
    <source>
    </source>
</evidence>
<evidence type="ECO:0000305" key="5"/>
<evidence type="ECO:0000312" key="6">
    <source>
        <dbReference type="MGI" id="MGI:2148199"/>
    </source>
</evidence>
<evidence type="ECO:0007744" key="7">
    <source>
    </source>
</evidence>
<evidence type="ECO:0007744" key="8">
    <source>
    </source>
</evidence>
<name>PECR_MOUSE</name>
<gene>
    <name evidence="6" type="primary">Pecr</name>
</gene>
<dbReference type="EC" id="1.3.1.38" evidence="3"/>
<dbReference type="EMBL" id="AF232011">
    <property type="protein sequence ID" value="AAF69800.1"/>
    <property type="molecule type" value="mRNA"/>
</dbReference>
<dbReference type="EMBL" id="AF242204">
    <property type="protein sequence ID" value="AAK28336.1"/>
    <property type="molecule type" value="mRNA"/>
</dbReference>
<dbReference type="EMBL" id="AK010260">
    <property type="protein sequence ID" value="BAB26803.1"/>
    <property type="molecule type" value="mRNA"/>
</dbReference>
<dbReference type="EMBL" id="BC013530">
    <property type="protein sequence ID" value="AAH13530.1"/>
    <property type="molecule type" value="mRNA"/>
</dbReference>
<dbReference type="CCDS" id="CCDS35607.1"/>
<dbReference type="RefSeq" id="NP_076012.3">
    <property type="nucleotide sequence ID" value="NM_023523.5"/>
</dbReference>
<dbReference type="SMR" id="Q99MZ7"/>
<dbReference type="BioGRID" id="226267">
    <property type="interactions" value="9"/>
</dbReference>
<dbReference type="FunCoup" id="Q99MZ7">
    <property type="interactions" value="609"/>
</dbReference>
<dbReference type="STRING" id="10090.ENSMUSP00000027381"/>
<dbReference type="GlyGen" id="Q99MZ7">
    <property type="glycosylation" value="1 site, 1 O-linked glycan (1 site)"/>
</dbReference>
<dbReference type="iPTMnet" id="Q99MZ7"/>
<dbReference type="PhosphoSitePlus" id="Q99MZ7"/>
<dbReference type="SwissPalm" id="Q99MZ7"/>
<dbReference type="REPRODUCTION-2DPAGE" id="Q99MZ7"/>
<dbReference type="jPOST" id="Q99MZ7"/>
<dbReference type="PaxDb" id="10090-ENSMUSP00000027381"/>
<dbReference type="PeptideAtlas" id="Q99MZ7"/>
<dbReference type="ProteomicsDB" id="289343"/>
<dbReference type="Pumba" id="Q99MZ7"/>
<dbReference type="Antibodypedia" id="20074">
    <property type="antibodies" value="198 antibodies from 27 providers"/>
</dbReference>
<dbReference type="DNASU" id="111175"/>
<dbReference type="Ensembl" id="ENSMUST00000027381.13">
    <property type="protein sequence ID" value="ENSMUSP00000027381.7"/>
    <property type="gene ID" value="ENSMUSG00000026189.14"/>
</dbReference>
<dbReference type="GeneID" id="111175"/>
<dbReference type="KEGG" id="mmu:111175"/>
<dbReference type="UCSC" id="uc007bki.2">
    <property type="organism name" value="mouse"/>
</dbReference>
<dbReference type="AGR" id="MGI:2148199"/>
<dbReference type="CTD" id="55825"/>
<dbReference type="MGI" id="MGI:2148199">
    <property type="gene designation" value="Pecr"/>
</dbReference>
<dbReference type="VEuPathDB" id="HostDB:ENSMUSG00000026189"/>
<dbReference type="eggNOG" id="KOG0725">
    <property type="taxonomic scope" value="Eukaryota"/>
</dbReference>
<dbReference type="GeneTree" id="ENSGT00940000156882"/>
<dbReference type="HOGENOM" id="CLU_010194_1_2_1"/>
<dbReference type="InParanoid" id="Q99MZ7"/>
<dbReference type="OMA" id="GYRICIN"/>
<dbReference type="OrthoDB" id="417891at2759"/>
<dbReference type="PhylomeDB" id="Q99MZ7"/>
<dbReference type="TreeFam" id="TF315256"/>
<dbReference type="BRENDA" id="1.3.1.38">
    <property type="organism ID" value="3474"/>
</dbReference>
<dbReference type="Reactome" id="R-MMU-389599">
    <property type="pathway name" value="Alpha-oxidation of phytanate"/>
</dbReference>
<dbReference type="Reactome" id="R-MMU-9033241">
    <property type="pathway name" value="Peroxisomal protein import"/>
</dbReference>
<dbReference type="UniPathway" id="UPA00094"/>
<dbReference type="BioGRID-ORCS" id="111175">
    <property type="hits" value="1 hit in 80 CRISPR screens"/>
</dbReference>
<dbReference type="ChiTaRS" id="Pecr">
    <property type="organism name" value="mouse"/>
</dbReference>
<dbReference type="PRO" id="PR:Q99MZ7"/>
<dbReference type="Proteomes" id="UP000000589">
    <property type="component" value="Chromosome 1"/>
</dbReference>
<dbReference type="RNAct" id="Q99MZ7">
    <property type="molecule type" value="protein"/>
</dbReference>
<dbReference type="Bgee" id="ENSMUSG00000026189">
    <property type="expression patterns" value="Expressed in right kidney and 226 other cell types or tissues"/>
</dbReference>
<dbReference type="ExpressionAtlas" id="Q99MZ7">
    <property type="expression patterns" value="baseline and differential"/>
</dbReference>
<dbReference type="GO" id="GO:0043231">
    <property type="term" value="C:intracellular membrane-bounded organelle"/>
    <property type="evidence" value="ECO:0000250"/>
    <property type="project" value="UniProtKB"/>
</dbReference>
<dbReference type="GO" id="GO:0005739">
    <property type="term" value="C:mitochondrion"/>
    <property type="evidence" value="ECO:0000314"/>
    <property type="project" value="UniProtKB"/>
</dbReference>
<dbReference type="GO" id="GO:0005778">
    <property type="term" value="C:peroxisomal membrane"/>
    <property type="evidence" value="ECO:0000250"/>
    <property type="project" value="UniProtKB"/>
</dbReference>
<dbReference type="GO" id="GO:0005777">
    <property type="term" value="C:peroxisome"/>
    <property type="evidence" value="ECO:0000247"/>
    <property type="project" value="MGI"/>
</dbReference>
<dbReference type="GO" id="GO:0005102">
    <property type="term" value="F:signaling receptor binding"/>
    <property type="evidence" value="ECO:0007669"/>
    <property type="project" value="Ensembl"/>
</dbReference>
<dbReference type="GO" id="GO:0019166">
    <property type="term" value="F:trans-2-enoyl-CoA reductase (NADPH) activity"/>
    <property type="evidence" value="ECO:0000250"/>
    <property type="project" value="UniProtKB"/>
</dbReference>
<dbReference type="GO" id="GO:0030497">
    <property type="term" value="P:fatty acid elongation"/>
    <property type="evidence" value="ECO:0000247"/>
    <property type="project" value="MGI"/>
</dbReference>
<dbReference type="GO" id="GO:0033306">
    <property type="term" value="P:phytol metabolic process"/>
    <property type="evidence" value="ECO:0007669"/>
    <property type="project" value="Ensembl"/>
</dbReference>
<dbReference type="CDD" id="cd05369">
    <property type="entry name" value="TER_DECR_SDR_a"/>
    <property type="match status" value="1"/>
</dbReference>
<dbReference type="FunFam" id="3.40.50.720:FF:000335">
    <property type="entry name" value="Peroxisomal trans-2-enoyl-CoA reductase"/>
    <property type="match status" value="1"/>
</dbReference>
<dbReference type="Gene3D" id="3.40.50.720">
    <property type="entry name" value="NAD(P)-binding Rossmann-like Domain"/>
    <property type="match status" value="1"/>
</dbReference>
<dbReference type="InterPro" id="IPR036291">
    <property type="entry name" value="NAD(P)-bd_dom_sf"/>
</dbReference>
<dbReference type="InterPro" id="IPR052388">
    <property type="entry name" value="Peroxisomal_t2-enoyl-CoA_red"/>
</dbReference>
<dbReference type="InterPro" id="IPR002347">
    <property type="entry name" value="SDR_fam"/>
</dbReference>
<dbReference type="PANTHER" id="PTHR24317">
    <property type="entry name" value="PEROXISOMAL TRANS-2-ENOYL-COA REDUCTASE"/>
    <property type="match status" value="1"/>
</dbReference>
<dbReference type="PANTHER" id="PTHR24317:SF7">
    <property type="entry name" value="PEROXISOMAL TRANS-2-ENOYL-COA REDUCTASE"/>
    <property type="match status" value="1"/>
</dbReference>
<dbReference type="Pfam" id="PF13561">
    <property type="entry name" value="adh_short_C2"/>
    <property type="match status" value="1"/>
</dbReference>
<dbReference type="PRINTS" id="PR00081">
    <property type="entry name" value="GDHRDH"/>
</dbReference>
<dbReference type="SUPFAM" id="SSF51735">
    <property type="entry name" value="NAD(P)-binding Rossmann-fold domains"/>
    <property type="match status" value="1"/>
</dbReference>
<sequence length="303" mass="32410">MGSWKTGQSYLAAGLLKNQVAVVTGGGTGIGKAVSRELLHLGCNVVIASRKLDRLTAAVDELRASLPPSSSAEVSAIQCNIRKEEEVSNLVKSTLAKYGKINFLVNNGGGQFMAPVEDITAKGWHAVIETNLTGTFYMCKEVYNSWMREHGGSIVNIIVLLNNGFPTAAHTGAAREGVYNLTKSMALAWASSGVRINCVAPGTIYSQTAVDNYGEMGQTLFEMAFDSIPAKRLGVPEEISPLVCFLLSPAASYITGQLINVDGGQALYTHAFSIPDHDNWPVGAGDLSIVKRIKESFKKKAKL</sequence>
<reference key="1">
    <citation type="journal article" date="2000" name="J. Biol. Chem.">
        <title>Molecular cloning and expression of mammalian peroxisomal trans-2-enoyl-coenzyme A reductase cDNAs.</title>
        <authorList>
            <person name="Das A.K."/>
            <person name="Uhler M.D."/>
            <person name="Hajra A.K."/>
        </authorList>
    </citation>
    <scope>NUCLEOTIDE SEQUENCE [MRNA]</scope>
    <scope>TISSUE SPECIFICITY</scope>
    <source>
        <tissue>Liver</tissue>
    </source>
</reference>
<reference key="2">
    <citation type="journal article" date="2001" name="Comb. Chem. High Throughput Screen.">
        <title>Identification of a novel human peroxisomal 2,4-dienoyl-CoA reductase related protein using the M13 phage protein VI phage display technology.</title>
        <authorList>
            <person name="Amery L."/>
            <person name="Mannaerts G.P."/>
            <person name="Subramani S."/>
            <person name="Van Veldhoven P.P."/>
            <person name="Fransen M."/>
        </authorList>
    </citation>
    <scope>NUCLEOTIDE SEQUENCE [MRNA]</scope>
</reference>
<reference key="3">
    <citation type="journal article" date="2005" name="Science">
        <title>The transcriptional landscape of the mammalian genome.</title>
        <authorList>
            <person name="Carninci P."/>
            <person name="Kasukawa T."/>
            <person name="Katayama S."/>
            <person name="Gough J."/>
            <person name="Frith M.C."/>
            <person name="Maeda N."/>
            <person name="Oyama R."/>
            <person name="Ravasi T."/>
            <person name="Lenhard B."/>
            <person name="Wells C."/>
            <person name="Kodzius R."/>
            <person name="Shimokawa K."/>
            <person name="Bajic V.B."/>
            <person name="Brenner S.E."/>
            <person name="Batalov S."/>
            <person name="Forrest A.R."/>
            <person name="Zavolan M."/>
            <person name="Davis M.J."/>
            <person name="Wilming L.G."/>
            <person name="Aidinis V."/>
            <person name="Allen J.E."/>
            <person name="Ambesi-Impiombato A."/>
            <person name="Apweiler R."/>
            <person name="Aturaliya R.N."/>
            <person name="Bailey T.L."/>
            <person name="Bansal M."/>
            <person name="Baxter L."/>
            <person name="Beisel K.W."/>
            <person name="Bersano T."/>
            <person name="Bono H."/>
            <person name="Chalk A.M."/>
            <person name="Chiu K.P."/>
            <person name="Choudhary V."/>
            <person name="Christoffels A."/>
            <person name="Clutterbuck D.R."/>
            <person name="Crowe M.L."/>
            <person name="Dalla E."/>
            <person name="Dalrymple B.P."/>
            <person name="de Bono B."/>
            <person name="Della Gatta G."/>
            <person name="di Bernardo D."/>
            <person name="Down T."/>
            <person name="Engstrom P."/>
            <person name="Fagiolini M."/>
            <person name="Faulkner G."/>
            <person name="Fletcher C.F."/>
            <person name="Fukushima T."/>
            <person name="Furuno M."/>
            <person name="Futaki S."/>
            <person name="Gariboldi M."/>
            <person name="Georgii-Hemming P."/>
            <person name="Gingeras T.R."/>
            <person name="Gojobori T."/>
            <person name="Green R.E."/>
            <person name="Gustincich S."/>
            <person name="Harbers M."/>
            <person name="Hayashi Y."/>
            <person name="Hensch T.K."/>
            <person name="Hirokawa N."/>
            <person name="Hill D."/>
            <person name="Huminiecki L."/>
            <person name="Iacono M."/>
            <person name="Ikeo K."/>
            <person name="Iwama A."/>
            <person name="Ishikawa T."/>
            <person name="Jakt M."/>
            <person name="Kanapin A."/>
            <person name="Katoh M."/>
            <person name="Kawasawa Y."/>
            <person name="Kelso J."/>
            <person name="Kitamura H."/>
            <person name="Kitano H."/>
            <person name="Kollias G."/>
            <person name="Krishnan S.P."/>
            <person name="Kruger A."/>
            <person name="Kummerfeld S.K."/>
            <person name="Kurochkin I.V."/>
            <person name="Lareau L.F."/>
            <person name="Lazarevic D."/>
            <person name="Lipovich L."/>
            <person name="Liu J."/>
            <person name="Liuni S."/>
            <person name="McWilliam S."/>
            <person name="Madan Babu M."/>
            <person name="Madera M."/>
            <person name="Marchionni L."/>
            <person name="Matsuda H."/>
            <person name="Matsuzawa S."/>
            <person name="Miki H."/>
            <person name="Mignone F."/>
            <person name="Miyake S."/>
            <person name="Morris K."/>
            <person name="Mottagui-Tabar S."/>
            <person name="Mulder N."/>
            <person name="Nakano N."/>
            <person name="Nakauchi H."/>
            <person name="Ng P."/>
            <person name="Nilsson R."/>
            <person name="Nishiguchi S."/>
            <person name="Nishikawa S."/>
            <person name="Nori F."/>
            <person name="Ohara O."/>
            <person name="Okazaki Y."/>
            <person name="Orlando V."/>
            <person name="Pang K.C."/>
            <person name="Pavan W.J."/>
            <person name="Pavesi G."/>
            <person name="Pesole G."/>
            <person name="Petrovsky N."/>
            <person name="Piazza S."/>
            <person name="Reed J."/>
            <person name="Reid J.F."/>
            <person name="Ring B.Z."/>
            <person name="Ringwald M."/>
            <person name="Rost B."/>
            <person name="Ruan Y."/>
            <person name="Salzberg S.L."/>
            <person name="Sandelin A."/>
            <person name="Schneider C."/>
            <person name="Schoenbach C."/>
            <person name="Sekiguchi K."/>
            <person name="Semple C.A."/>
            <person name="Seno S."/>
            <person name="Sessa L."/>
            <person name="Sheng Y."/>
            <person name="Shibata Y."/>
            <person name="Shimada H."/>
            <person name="Shimada K."/>
            <person name="Silva D."/>
            <person name="Sinclair B."/>
            <person name="Sperling S."/>
            <person name="Stupka E."/>
            <person name="Sugiura K."/>
            <person name="Sultana R."/>
            <person name="Takenaka Y."/>
            <person name="Taki K."/>
            <person name="Tammoja K."/>
            <person name="Tan S.L."/>
            <person name="Tang S."/>
            <person name="Taylor M.S."/>
            <person name="Tegner J."/>
            <person name="Teichmann S.A."/>
            <person name="Ueda H.R."/>
            <person name="van Nimwegen E."/>
            <person name="Verardo R."/>
            <person name="Wei C.L."/>
            <person name="Yagi K."/>
            <person name="Yamanishi H."/>
            <person name="Zabarovsky E."/>
            <person name="Zhu S."/>
            <person name="Zimmer A."/>
            <person name="Hide W."/>
            <person name="Bult C."/>
            <person name="Grimmond S.M."/>
            <person name="Teasdale R.D."/>
            <person name="Liu E.T."/>
            <person name="Brusic V."/>
            <person name="Quackenbush J."/>
            <person name="Wahlestedt C."/>
            <person name="Mattick J.S."/>
            <person name="Hume D.A."/>
            <person name="Kai C."/>
            <person name="Sasaki D."/>
            <person name="Tomaru Y."/>
            <person name="Fukuda S."/>
            <person name="Kanamori-Katayama M."/>
            <person name="Suzuki M."/>
            <person name="Aoki J."/>
            <person name="Arakawa T."/>
            <person name="Iida J."/>
            <person name="Imamura K."/>
            <person name="Itoh M."/>
            <person name="Kato T."/>
            <person name="Kawaji H."/>
            <person name="Kawagashira N."/>
            <person name="Kawashima T."/>
            <person name="Kojima M."/>
            <person name="Kondo S."/>
            <person name="Konno H."/>
            <person name="Nakano K."/>
            <person name="Ninomiya N."/>
            <person name="Nishio T."/>
            <person name="Okada M."/>
            <person name="Plessy C."/>
            <person name="Shibata K."/>
            <person name="Shiraki T."/>
            <person name="Suzuki S."/>
            <person name="Tagami M."/>
            <person name="Waki K."/>
            <person name="Watahiki A."/>
            <person name="Okamura-Oho Y."/>
            <person name="Suzuki H."/>
            <person name="Kawai J."/>
            <person name="Hayashizaki Y."/>
        </authorList>
    </citation>
    <scope>NUCLEOTIDE SEQUENCE [LARGE SCALE MRNA]</scope>
    <source>
        <strain>C57BL/6J</strain>
    </source>
</reference>
<reference key="4">
    <citation type="journal article" date="2004" name="Genome Res.">
        <title>The status, quality, and expansion of the NIH full-length cDNA project: the Mammalian Gene Collection (MGC).</title>
        <authorList>
            <consortium name="The MGC Project Team"/>
        </authorList>
    </citation>
    <scope>NUCLEOTIDE SEQUENCE [LARGE SCALE MRNA]</scope>
    <source>
        <strain>FVB/N</strain>
        <tissue>Kidney</tissue>
    </source>
</reference>
<reference key="5">
    <citation type="journal article" date="2010" name="Cell">
        <title>A tissue-specific atlas of mouse protein phosphorylation and expression.</title>
        <authorList>
            <person name="Huttlin E.L."/>
            <person name="Jedrychowski M.P."/>
            <person name="Elias J.E."/>
            <person name="Goswami T."/>
            <person name="Rad R."/>
            <person name="Beausoleil S.A."/>
            <person name="Villen J."/>
            <person name="Haas W."/>
            <person name="Sowa M.E."/>
            <person name="Gygi S.P."/>
        </authorList>
    </citation>
    <scope>IDENTIFICATION BY MASS SPECTROMETRY [LARGE SCALE ANALYSIS]</scope>
    <source>
        <tissue>Brown adipose tissue</tissue>
        <tissue>Heart</tissue>
        <tissue>Kidney</tissue>
        <tissue>Liver</tissue>
        <tissue>Lung</tissue>
        <tissue>Pancreas</tissue>
    </source>
</reference>
<reference key="6">
    <citation type="journal article" date="2013" name="Mol. Cell">
        <title>SIRT5-mediated lysine desuccinylation impacts diverse metabolic pathways.</title>
        <authorList>
            <person name="Park J."/>
            <person name="Chen Y."/>
            <person name="Tishkoff D.X."/>
            <person name="Peng C."/>
            <person name="Tan M."/>
            <person name="Dai L."/>
            <person name="Xie Z."/>
            <person name="Zhang Y."/>
            <person name="Zwaans B.M."/>
            <person name="Skinner M.E."/>
            <person name="Lombard D.B."/>
            <person name="Zhao Y."/>
        </authorList>
    </citation>
    <scope>ACETYLATION [LARGE SCALE ANALYSIS] AT GLY-2</scope>
    <scope>SUCCINYLATION [LARGE SCALE ANALYSIS] AT LYS-5; LYS-17 AND LYS-32</scope>
    <scope>CLEAVAGE OF INITIATOR METHIONINE [LARGE SCALE ANALYSIS]</scope>
    <scope>IDENTIFICATION BY MASS SPECTROMETRY [LARGE SCALE ANALYSIS]</scope>
    <source>
        <tissue>Liver</tissue>
    </source>
</reference>
<reference key="7">
    <citation type="journal article" date="2013" name="Proc. Natl. Acad. Sci. U.S.A.">
        <title>Label-free quantitative proteomics of the lysine acetylome in mitochondria identifies substrates of SIRT3 in metabolic pathways.</title>
        <authorList>
            <person name="Rardin M.J."/>
            <person name="Newman J.C."/>
            <person name="Held J.M."/>
            <person name="Cusack M.P."/>
            <person name="Sorensen D.J."/>
            <person name="Li B."/>
            <person name="Schilling B."/>
            <person name="Mooney S.D."/>
            <person name="Kahn C.R."/>
            <person name="Verdin E."/>
            <person name="Gibson B.W."/>
        </authorList>
    </citation>
    <scope>ACETYLATION [LARGE SCALE ANALYSIS] AT LYS-17; LYS-83 AND LYS-97</scope>
    <scope>IDENTIFICATION BY MASS SPECTROMETRY [LARGE SCALE ANALYSIS]</scope>
    <source>
        <tissue>Liver</tissue>
    </source>
</reference>
<comment type="function">
    <text evidence="3">Participates in chain elongation of fatty acids. Catalyzes the reduction of trans-2-enoyl-CoAs of varying chain lengths from 6:1 to 16:1, having maximum activity with 10:1 CoA. Has no 2,4-dienoyl-CoA reductase activity.</text>
</comment>
<comment type="catalytic activity">
    <reaction evidence="3">
        <text>a (2E)-enoyl-CoA + NADPH + H(+) = a 2,3-saturated acyl-CoA + NADP(+)</text>
        <dbReference type="Rhea" id="RHEA:33763"/>
        <dbReference type="ChEBI" id="CHEBI:15378"/>
        <dbReference type="ChEBI" id="CHEBI:57783"/>
        <dbReference type="ChEBI" id="CHEBI:58349"/>
        <dbReference type="ChEBI" id="CHEBI:58856"/>
        <dbReference type="ChEBI" id="CHEBI:65111"/>
        <dbReference type="EC" id="1.3.1.38"/>
    </reaction>
    <physiologicalReaction direction="left-to-right" evidence="3">
        <dbReference type="Rhea" id="RHEA:33764"/>
    </physiologicalReaction>
</comment>
<comment type="catalytic activity">
    <reaction evidence="3">
        <text>(2E)-hexenoyl-CoA + NADPH + H(+) = hexanoyl-CoA + NADP(+)</text>
        <dbReference type="Rhea" id="RHEA:44956"/>
        <dbReference type="ChEBI" id="CHEBI:15378"/>
        <dbReference type="ChEBI" id="CHEBI:57783"/>
        <dbReference type="ChEBI" id="CHEBI:58349"/>
        <dbReference type="ChEBI" id="CHEBI:62077"/>
        <dbReference type="ChEBI" id="CHEBI:62620"/>
    </reaction>
    <physiologicalReaction direction="left-to-right" evidence="3">
        <dbReference type="Rhea" id="RHEA:44957"/>
    </physiologicalReaction>
</comment>
<comment type="catalytic activity">
    <reaction evidence="3">
        <text>(2E)-octenoyl-CoA + NADPH + H(+) = octanoyl-CoA + NADP(+)</text>
        <dbReference type="Rhea" id="RHEA:44952"/>
        <dbReference type="ChEBI" id="CHEBI:15378"/>
        <dbReference type="ChEBI" id="CHEBI:57386"/>
        <dbReference type="ChEBI" id="CHEBI:57783"/>
        <dbReference type="ChEBI" id="CHEBI:58349"/>
        <dbReference type="ChEBI" id="CHEBI:62242"/>
    </reaction>
    <physiologicalReaction direction="left-to-right" evidence="3">
        <dbReference type="Rhea" id="RHEA:44953"/>
    </physiologicalReaction>
</comment>
<comment type="catalytic activity">
    <reaction evidence="3">
        <text>(2E)-decenoyl-CoA + NADPH + H(+) = decanoyl-CoA + NADP(+)</text>
        <dbReference type="Rhea" id="RHEA:44960"/>
        <dbReference type="ChEBI" id="CHEBI:15378"/>
        <dbReference type="ChEBI" id="CHEBI:57783"/>
        <dbReference type="ChEBI" id="CHEBI:58349"/>
        <dbReference type="ChEBI" id="CHEBI:61406"/>
        <dbReference type="ChEBI" id="CHEBI:61430"/>
    </reaction>
    <physiologicalReaction direction="left-to-right" evidence="3">
        <dbReference type="Rhea" id="RHEA:44961"/>
    </physiologicalReaction>
</comment>
<comment type="catalytic activity">
    <reaction evidence="3">
        <text>(2E)-dodecenoyl-CoA + NADPH + H(+) = dodecanoyl-CoA + NADP(+)</text>
        <dbReference type="Rhea" id="RHEA:44964"/>
        <dbReference type="ChEBI" id="CHEBI:15378"/>
        <dbReference type="ChEBI" id="CHEBI:57330"/>
        <dbReference type="ChEBI" id="CHEBI:57375"/>
        <dbReference type="ChEBI" id="CHEBI:57783"/>
        <dbReference type="ChEBI" id="CHEBI:58349"/>
    </reaction>
    <physiologicalReaction direction="left-to-right" evidence="3">
        <dbReference type="Rhea" id="RHEA:44965"/>
    </physiologicalReaction>
</comment>
<comment type="catalytic activity">
    <reaction evidence="3">
        <text>(2E)-tetradecenoyl-CoA + NADPH + H(+) = tetradecanoyl-CoA + NADP(+)</text>
        <dbReference type="Rhea" id="RHEA:44968"/>
        <dbReference type="ChEBI" id="CHEBI:15378"/>
        <dbReference type="ChEBI" id="CHEBI:57385"/>
        <dbReference type="ChEBI" id="CHEBI:57783"/>
        <dbReference type="ChEBI" id="CHEBI:58349"/>
        <dbReference type="ChEBI" id="CHEBI:61405"/>
    </reaction>
    <physiologicalReaction direction="left-to-right" evidence="3">
        <dbReference type="Rhea" id="RHEA:44969"/>
    </physiologicalReaction>
</comment>
<comment type="pathway">
    <text evidence="3">Lipid metabolism; fatty acid biosynthesis.</text>
</comment>
<comment type="subunit">
    <text evidence="2">Interacts with PEX5, probably required to target it into peroxisomes.</text>
</comment>
<comment type="subcellular location">
    <subcellularLocation>
        <location evidence="3">Peroxisome</location>
    </subcellularLocation>
</comment>
<comment type="tissue specificity">
    <text evidence="4">Highly expressed in liver and kidney. Expressed at lowe level in heart and skeletal muscle. Expressed at weak level in other tissues.</text>
</comment>
<comment type="similarity">
    <text evidence="5">Belongs to the short-chain dehydrogenases/reductases (SDR) family.</text>
</comment>
<keyword id="KW-0007">Acetylation</keyword>
<keyword id="KW-0275">Fatty acid biosynthesis</keyword>
<keyword id="KW-0276">Fatty acid metabolism</keyword>
<keyword id="KW-0444">Lipid biosynthesis</keyword>
<keyword id="KW-0443">Lipid metabolism</keyword>
<keyword id="KW-0521">NADP</keyword>
<keyword id="KW-0560">Oxidoreductase</keyword>
<keyword id="KW-0576">Peroxisome</keyword>
<keyword id="KW-0597">Phosphoprotein</keyword>
<keyword id="KW-1185">Reference proteome</keyword>
<feature type="initiator methionine" description="Removed" evidence="8">
    <location>
        <position position="1"/>
    </location>
</feature>
<feature type="chain" id="PRO_0000054741" description="Peroxisomal trans-2-enoyl-CoA reductase">
    <location>
        <begin position="2"/>
        <end position="303"/>
    </location>
</feature>
<feature type="short sequence motif" description="Microbody targeting signal" evidence="1">
    <location>
        <begin position="301"/>
        <end position="303"/>
    </location>
</feature>
<feature type="active site" description="Proton acceptor" evidence="1">
    <location>
        <position position="179"/>
    </location>
</feature>
<feature type="binding site" evidence="1">
    <location>
        <begin position="23"/>
        <end position="47"/>
    </location>
    <ligand>
        <name>NADP(+)</name>
        <dbReference type="ChEBI" id="CHEBI:58349"/>
    </ligand>
</feature>
<feature type="modified residue" description="N-acetylglycine" evidence="8">
    <location>
        <position position="2"/>
    </location>
</feature>
<feature type="modified residue" description="N6-succinyllysine" evidence="8">
    <location>
        <position position="5"/>
    </location>
</feature>
<feature type="modified residue" description="N6-acetyllysine; alternate" evidence="7">
    <location>
        <position position="17"/>
    </location>
</feature>
<feature type="modified residue" description="N6-succinyllysine; alternate" evidence="8">
    <location>
        <position position="17"/>
    </location>
</feature>
<feature type="modified residue" description="N6-succinyllysine" evidence="8">
    <location>
        <position position="32"/>
    </location>
</feature>
<feature type="modified residue" description="Phosphoserine" evidence="2">
    <location>
        <position position="49"/>
    </location>
</feature>
<feature type="modified residue" description="N6-acetyllysine" evidence="7">
    <location>
        <position position="83"/>
    </location>
</feature>
<feature type="modified residue" description="N6-acetyllysine" evidence="7">
    <location>
        <position position="97"/>
    </location>
</feature>
<feature type="modified residue" description="Phosphotyrosine" evidence="2">
    <location>
        <position position="179"/>
    </location>
</feature>
<feature type="sequence conflict" description="In Ref. 3; BAB26803." evidence="5" ref="3">
    <original>N</original>
    <variation>Y</variation>
    <location>
        <position position="89"/>
    </location>
</feature>
<feature type="sequence conflict" description="In Ref. 1; AAF69800." evidence="5" ref="1">
    <original>AKR</original>
    <variation>VSA</variation>
    <location>
        <begin position="230"/>
        <end position="232"/>
    </location>
</feature>
<feature type="sequence conflict" description="In Ref. 1; AAF69800." evidence="5" ref="1">
    <original>PLVC</original>
    <variation>LLAR</variation>
    <location>
        <begin position="241"/>
        <end position="244"/>
    </location>
</feature>
<feature type="sequence conflict" description="In Ref. 1; AAF69800." evidence="5" ref="1">
    <original>Y</original>
    <variation>H</variation>
    <location>
        <position position="268"/>
    </location>
</feature>
<accession>Q99MZ7</accession>
<accession>Q9CX01</accession>
<accession>Q9JIF4</accession>
<organism>
    <name type="scientific">Mus musculus</name>
    <name type="common">Mouse</name>
    <dbReference type="NCBI Taxonomy" id="10090"/>
    <lineage>
        <taxon>Eukaryota</taxon>
        <taxon>Metazoa</taxon>
        <taxon>Chordata</taxon>
        <taxon>Craniata</taxon>
        <taxon>Vertebrata</taxon>
        <taxon>Euteleostomi</taxon>
        <taxon>Mammalia</taxon>
        <taxon>Eutheria</taxon>
        <taxon>Euarchontoglires</taxon>
        <taxon>Glires</taxon>
        <taxon>Rodentia</taxon>
        <taxon>Myomorpha</taxon>
        <taxon>Muroidea</taxon>
        <taxon>Muridae</taxon>
        <taxon>Murinae</taxon>
        <taxon>Mus</taxon>
        <taxon>Mus</taxon>
    </lineage>
</organism>